<gene>
    <name type="primary">RPO35</name>
    <name type="ORF">HM4</name>
</gene>
<feature type="chain" id="PRO_0000099136" description="DNA-directed RNA polymerase 35 kDa subunit">
    <location>
        <begin position="1" status="less than"/>
        <end position="126"/>
    </location>
</feature>
<feature type="non-terminal residue">
    <location>
        <position position="1"/>
    </location>
</feature>
<proteinExistence type="inferred from homology"/>
<sequence>SFESIIPFIVTAPLGRLTFYVEHYPWIDFKSHMKEILDFLEGSLVSDVHSHKLETSVLDNSTSSSYNPVSGMLFVNDLLTMTVVNFFGCNSRLNSYHRFDMTKLDINTFLKALADAFKKIANYLEV</sequence>
<name>RP35_SHEVK</name>
<evidence type="ECO:0000250" key="1"/>
<evidence type="ECO:0000305" key="2"/>
<reference key="1">
    <citation type="journal article" date="1989" name="J. Virol.">
        <title>A comparison of the genome organization of capripoxvirus with that of the orthopoxviruses.</title>
        <authorList>
            <person name="Gershon P.D."/>
            <person name="Ansell D.M."/>
            <person name="Black D.N."/>
        </authorList>
    </citation>
    <scope>NUCLEOTIDE SEQUENCE [GENOMIC DNA]</scope>
</reference>
<keyword id="KW-0240">DNA-directed RNA polymerase</keyword>
<keyword id="KW-0548">Nucleotidyltransferase</keyword>
<keyword id="KW-0804">Transcription</keyword>
<keyword id="KW-0808">Transferase</keyword>
<keyword id="KW-0946">Virion</keyword>
<protein>
    <recommendedName>
        <fullName>DNA-directed RNA polymerase 35 kDa subunit</fullName>
        <ecNumber>2.7.7.6</ecNumber>
    </recommendedName>
</protein>
<dbReference type="EC" id="2.7.7.6"/>
<dbReference type="EMBL" id="M30039">
    <property type="protein sequence ID" value="AAC32900.1"/>
    <property type="molecule type" value="Genomic_DNA"/>
</dbReference>
<dbReference type="PIR" id="D33325">
    <property type="entry name" value="WMVZM4"/>
</dbReference>
<dbReference type="SMR" id="P19749"/>
<dbReference type="GO" id="GO:0000428">
    <property type="term" value="C:DNA-directed RNA polymerase complex"/>
    <property type="evidence" value="ECO:0007669"/>
    <property type="project" value="UniProtKB-KW"/>
</dbReference>
<dbReference type="GO" id="GO:0044423">
    <property type="term" value="C:virion component"/>
    <property type="evidence" value="ECO:0007669"/>
    <property type="project" value="UniProtKB-KW"/>
</dbReference>
<dbReference type="GO" id="GO:0003677">
    <property type="term" value="F:DNA binding"/>
    <property type="evidence" value="ECO:0007669"/>
    <property type="project" value="InterPro"/>
</dbReference>
<dbReference type="GO" id="GO:0003899">
    <property type="term" value="F:DNA-directed RNA polymerase activity"/>
    <property type="evidence" value="ECO:0007669"/>
    <property type="project" value="UniProtKB-EC"/>
</dbReference>
<dbReference type="GO" id="GO:0019083">
    <property type="term" value="P:viral transcription"/>
    <property type="evidence" value="ECO:0007669"/>
    <property type="project" value="InterPro"/>
</dbReference>
<dbReference type="InterPro" id="IPR005059">
    <property type="entry name" value="DNA-dir_RNA_pol_35kDa_poxviral"/>
</dbReference>
<dbReference type="Pfam" id="PF03396">
    <property type="entry name" value="Pox_RNA_pol_35"/>
    <property type="match status" value="1"/>
</dbReference>
<organismHost>
    <name type="scientific">Ovis aries</name>
    <name type="common">Sheep</name>
    <dbReference type="NCBI Taxonomy" id="9940"/>
</organismHost>
<organism>
    <name type="scientific">Sheeppox virus (strain KS-1)</name>
    <name type="common">SPPV</name>
    <name type="synonym">Capripoxvirus (strain KS-1)</name>
    <dbReference type="NCBI Taxonomy" id="10269"/>
    <lineage>
        <taxon>Viruses</taxon>
        <taxon>Varidnaviria</taxon>
        <taxon>Bamfordvirae</taxon>
        <taxon>Nucleocytoviricota</taxon>
        <taxon>Pokkesviricetes</taxon>
        <taxon>Chitovirales</taxon>
        <taxon>Poxviridae</taxon>
        <taxon>Chordopoxvirinae</taxon>
        <taxon>Capripoxvirus</taxon>
        <taxon>Sheeppox virus</taxon>
    </lineage>
</organism>
<accession>P19749</accession>
<comment type="function">
    <text evidence="1">Part of the DNA-dependent RNA polymerase which catalyzes the transcription of viral DNA into RNA using the four ribonucleoside triphosphates as substrates. Responsible for the transcription of early, intermediate and late genes. DNA-dependent RNA polymerase associates with the early transcription factor (ETF) thereby allowing the early genes transcription. Late transcription, and probably also intermediate transcription, require newly synthesized RNA polymerase (By similarity).</text>
</comment>
<comment type="catalytic activity">
    <reaction>
        <text>RNA(n) + a ribonucleoside 5'-triphosphate = RNA(n+1) + diphosphate</text>
        <dbReference type="Rhea" id="RHEA:21248"/>
        <dbReference type="Rhea" id="RHEA-COMP:14527"/>
        <dbReference type="Rhea" id="RHEA-COMP:17342"/>
        <dbReference type="ChEBI" id="CHEBI:33019"/>
        <dbReference type="ChEBI" id="CHEBI:61557"/>
        <dbReference type="ChEBI" id="CHEBI:140395"/>
        <dbReference type="EC" id="2.7.7.6"/>
    </reaction>
</comment>
<comment type="subunit">
    <text evidence="1">The DNA-dependent RNA polymerase used for intermediate and late genes expression consists of eight subunits 147 kDa, 133 kDa, 35 kDa, 30 kDa, 22 kDa, 19 kDa, 18 kDa and 7 kDa totalling more than 500 kDa in mass. The same holoenzyme, with the addition of the transcription-specificity factor RAP94, is used for early gene expression (By similarity).</text>
</comment>
<comment type="subcellular location">
    <subcellularLocation>
        <location evidence="2">Virion</location>
    </subcellularLocation>
    <text evidence="1">All the enzymes and other proteins required to synthesize early mRNAs are packaged within the virion core along with the DNA genome. This is necessary because viral early mRNAs are synthesized within minutes after virus entry into the cell and are extruded through pores in the core particle (By similarity).</text>
</comment>
<comment type="similarity">
    <text evidence="2">Belongs to the poxviridae DNA-directed RNA polymerase 35 kDa subunit family.</text>
</comment>